<evidence type="ECO:0000269" key="1">
    <source>
    </source>
</evidence>
<evidence type="ECO:0000305" key="2"/>
<dbReference type="EC" id="1.-.-.-"/>
<dbReference type="EMBL" id="CP000480">
    <property type="protein sequence ID" value="ABK75325.1"/>
    <property type="molecule type" value="Genomic_DNA"/>
</dbReference>
<dbReference type="EMBL" id="CP001663">
    <property type="protein sequence ID" value="AFP38037.1"/>
    <property type="status" value="ALT_INIT"/>
    <property type="molecule type" value="Genomic_DNA"/>
</dbReference>
<dbReference type="RefSeq" id="WP_011727767.1">
    <property type="nucleotide sequence ID" value="NZ_SIJM01000023.1"/>
</dbReference>
<dbReference type="RefSeq" id="YP_885982.1">
    <property type="nucleotide sequence ID" value="NC_008596.1"/>
</dbReference>
<dbReference type="SMR" id="A0QSU4"/>
<dbReference type="STRING" id="246196.MSMEG_1603"/>
<dbReference type="PaxDb" id="246196-MSMEI_1564"/>
<dbReference type="KEGG" id="msg:MSMEI_1564"/>
<dbReference type="KEGG" id="msm:MSMEG_1603"/>
<dbReference type="PATRIC" id="fig|246196.19.peg.1589"/>
<dbReference type="eggNOG" id="COG0516">
    <property type="taxonomic scope" value="Bacteria"/>
</dbReference>
<dbReference type="OrthoDB" id="9805398at2"/>
<dbReference type="Proteomes" id="UP000000757">
    <property type="component" value="Chromosome"/>
</dbReference>
<dbReference type="Proteomes" id="UP000006158">
    <property type="component" value="Chromosome"/>
</dbReference>
<dbReference type="GO" id="GO:0003938">
    <property type="term" value="F:IMP dehydrogenase activity"/>
    <property type="evidence" value="ECO:0007669"/>
    <property type="project" value="InterPro"/>
</dbReference>
<dbReference type="GO" id="GO:0006183">
    <property type="term" value="P:GTP biosynthetic process"/>
    <property type="evidence" value="ECO:0007669"/>
    <property type="project" value="TreeGrafter"/>
</dbReference>
<dbReference type="CDD" id="cd00381">
    <property type="entry name" value="IMPDH"/>
    <property type="match status" value="1"/>
</dbReference>
<dbReference type="FunFam" id="3.20.20.70:FF:000060">
    <property type="entry name" value="IMP dehydrogenase subunit"/>
    <property type="match status" value="1"/>
</dbReference>
<dbReference type="Gene3D" id="3.20.20.70">
    <property type="entry name" value="Aldolase class I"/>
    <property type="match status" value="1"/>
</dbReference>
<dbReference type="InterPro" id="IPR013785">
    <property type="entry name" value="Aldolase_TIM"/>
</dbReference>
<dbReference type="InterPro" id="IPR005990">
    <property type="entry name" value="IMP_DH"/>
</dbReference>
<dbReference type="InterPro" id="IPR005992">
    <property type="entry name" value="IMP_DH-rel2"/>
</dbReference>
<dbReference type="InterPro" id="IPR001093">
    <property type="entry name" value="IMP_DH_GMPRt"/>
</dbReference>
<dbReference type="NCBIfam" id="TIGR01304">
    <property type="entry name" value="IMP_DH_rel_2"/>
    <property type="match status" value="1"/>
</dbReference>
<dbReference type="PANTHER" id="PTHR11911:SF111">
    <property type="entry name" value="INOSINE-5'-MONOPHOSPHATE DEHYDROGENASE"/>
    <property type="match status" value="1"/>
</dbReference>
<dbReference type="PANTHER" id="PTHR11911">
    <property type="entry name" value="INOSINE-5-MONOPHOSPHATE DEHYDROGENASE RELATED"/>
    <property type="match status" value="1"/>
</dbReference>
<dbReference type="Pfam" id="PF00478">
    <property type="entry name" value="IMPDH"/>
    <property type="match status" value="1"/>
</dbReference>
<dbReference type="SMART" id="SM01240">
    <property type="entry name" value="IMPDH"/>
    <property type="match status" value="1"/>
</dbReference>
<dbReference type="SUPFAM" id="SSF51412">
    <property type="entry name" value="Inosine monophosphate dehydrogenase (IMPDH)"/>
    <property type="match status" value="1"/>
</dbReference>
<comment type="similarity">
    <text evidence="2">Belongs to the IMPDH/GMPR family.</text>
</comment>
<comment type="sequence caution" evidence="2">
    <conflict type="erroneous initiation">
        <sequence resource="EMBL-CDS" id="AFP38037"/>
    </conflict>
    <text>Extended N-terminus.</text>
</comment>
<name>Y1603_MYCS2</name>
<organism>
    <name type="scientific">Mycolicibacterium smegmatis (strain ATCC 700084 / mc(2)155)</name>
    <name type="common">Mycobacterium smegmatis</name>
    <dbReference type="NCBI Taxonomy" id="246196"/>
    <lineage>
        <taxon>Bacteria</taxon>
        <taxon>Bacillati</taxon>
        <taxon>Actinomycetota</taxon>
        <taxon>Actinomycetes</taxon>
        <taxon>Mycobacteriales</taxon>
        <taxon>Mycobacteriaceae</taxon>
        <taxon>Mycolicibacterium</taxon>
    </lineage>
</organism>
<sequence>MVEIGMGRTARRTYELEDVTIVPSRRTRSSKDVSTAWQLDAYRFEIPVIAHPTDALVSPEFAIEMGRLGGLGVLNGEGLIGRHADVEEKIAQVVEVAAKEPEPSAAIRLLQQLHAAPLDPDLLGAAVARIREAGVTTAVRVSPQNAQALTPTLVAAGIDLLVIQGTIISAERVASDGEPLNLKTFISELDVPVVAGGVLDHRTALHLMRTGAAGVIVGYGSTSGVTTSDEVLGISVPMATAIADAAAARREYLDETGGRYVHVLADGDIHSSGDLAKAIACGADAVVLGTPLATSAEALGNGWFWPAAAAHPSLPRGALLQVALGERPSLEQVLTGPSDDPFGSLNLVGGLRRSMAKAGYCDLKEFQKVGLTVGS</sequence>
<feature type="chain" id="PRO_0000396107" description="Uncharacterized oxidoreductase MSMEG_1603/MSMEI_1564">
    <location>
        <begin position="1"/>
        <end position="375"/>
    </location>
</feature>
<feature type="cross-link" description="Isoglutamyl lysine isopeptide (Lys-Gln) (interchain with Q-Cter in protein Pup)" evidence="1">
    <location>
        <position position="99"/>
    </location>
</feature>
<gene>
    <name type="ordered locus">MSMEG_1603</name>
    <name type="ordered locus">MSMEI_1564</name>
</gene>
<accession>A0QSU4</accession>
<accession>I7FYG7</accession>
<protein>
    <recommendedName>
        <fullName>Uncharacterized oxidoreductase MSMEG_1603/MSMEI_1564</fullName>
        <ecNumber>1.-.-.-</ecNumber>
    </recommendedName>
</protein>
<keyword id="KW-1017">Isopeptide bond</keyword>
<keyword id="KW-0520">NAD</keyword>
<keyword id="KW-0560">Oxidoreductase</keyword>
<keyword id="KW-1185">Reference proteome</keyword>
<keyword id="KW-0832">Ubl conjugation</keyword>
<proteinExistence type="evidence at protein level"/>
<reference key="1">
    <citation type="submission" date="2006-10" db="EMBL/GenBank/DDBJ databases">
        <authorList>
            <person name="Fleischmann R.D."/>
            <person name="Dodson R.J."/>
            <person name="Haft D.H."/>
            <person name="Merkel J.S."/>
            <person name="Nelson W.C."/>
            <person name="Fraser C.M."/>
        </authorList>
    </citation>
    <scope>NUCLEOTIDE SEQUENCE [LARGE SCALE GENOMIC DNA]</scope>
    <source>
        <strain>ATCC 700084 / mc(2)155</strain>
    </source>
</reference>
<reference key="2">
    <citation type="journal article" date="2007" name="Genome Biol.">
        <title>Interrupted coding sequences in Mycobacterium smegmatis: authentic mutations or sequencing errors?</title>
        <authorList>
            <person name="Deshayes C."/>
            <person name="Perrodou E."/>
            <person name="Gallien S."/>
            <person name="Euphrasie D."/>
            <person name="Schaeffer C."/>
            <person name="Van-Dorsselaer A."/>
            <person name="Poch O."/>
            <person name="Lecompte O."/>
            <person name="Reyrat J.-M."/>
        </authorList>
    </citation>
    <scope>NUCLEOTIDE SEQUENCE [LARGE SCALE GENOMIC DNA]</scope>
    <source>
        <strain>ATCC 700084 / mc(2)155</strain>
    </source>
</reference>
<reference key="3">
    <citation type="journal article" date="2009" name="Genome Res.">
        <title>Ortho-proteogenomics: multiple proteomes investigation through orthology and a new MS-based protocol.</title>
        <authorList>
            <person name="Gallien S."/>
            <person name="Perrodou E."/>
            <person name="Carapito C."/>
            <person name="Deshayes C."/>
            <person name="Reyrat J.-M."/>
            <person name="Van Dorsselaer A."/>
            <person name="Poch O."/>
            <person name="Schaeffer C."/>
            <person name="Lecompte O."/>
        </authorList>
    </citation>
    <scope>NUCLEOTIDE SEQUENCE [LARGE SCALE GENOMIC DNA]</scope>
    <source>
        <strain>ATCC 700084 / mc(2)155</strain>
    </source>
</reference>
<reference key="4">
    <citation type="journal article" date="2010" name="Mol. Biosyst.">
        <title>Expansion of the mycobacterial 'PUPylome'.</title>
        <authorList>
            <person name="Watrous J."/>
            <person name="Burns K."/>
            <person name="Liu W.T."/>
            <person name="Patel A."/>
            <person name="Hook V."/>
            <person name="Bafna V."/>
            <person name="Barry C.E. III"/>
            <person name="Bark S."/>
            <person name="Dorrestein P.C."/>
        </authorList>
    </citation>
    <scope>PUPYLATION AT LYS-99</scope>
    <scope>IDENTIFICATION BY MASS SPECTROMETRY</scope>
</reference>